<keyword id="KW-1157">Cap snatching</keyword>
<keyword id="KW-1262">Eukaryotic host gene expression shutoff by virus</keyword>
<keyword id="KW-1191">Eukaryotic host transcription shutoff by virus</keyword>
<keyword id="KW-1190">Host gene expression shutoff by virus</keyword>
<keyword id="KW-1045">Host mitochondrion</keyword>
<keyword id="KW-1048">Host nucleus</keyword>
<keyword id="KW-0945">Host-virus interaction</keyword>
<keyword id="KW-1090">Inhibition of host innate immune response by virus</keyword>
<keyword id="KW-1097">Inhibition of host MAVS by virus</keyword>
<keyword id="KW-1113">Inhibition of host RLR pathway by virus</keyword>
<keyword id="KW-1104">Inhibition of host RNA polymerase II by virus</keyword>
<keyword id="KW-0506">mRNA capping</keyword>
<keyword id="KW-0507">mRNA processing</keyword>
<keyword id="KW-0899">Viral immunoevasion</keyword>
<keyword id="KW-1195">Viral transcription</keyword>
<keyword id="KW-0946">Virion</keyword>
<gene>
    <name evidence="1" type="primary">PB2</name>
</gene>
<reference key="1">
    <citation type="submission" date="2007-10" db="EMBL/GenBank/DDBJ databases">
        <title>The NIAID influenza genome sequencing project.</title>
        <authorList>
            <person name="Ghedin E."/>
            <person name="Spiro D."/>
            <person name="Miller N."/>
            <person name="Zaborsky J."/>
            <person name="Feldblyum T."/>
            <person name="Subbu V."/>
            <person name="Shumway M."/>
            <person name="Sparenborg J."/>
            <person name="Groveman L."/>
            <person name="Halpin R."/>
            <person name="Sitz J."/>
            <person name="Koo H."/>
            <person name="Salzberg S.L."/>
            <person name="Webster R.G."/>
            <person name="Hoffmann E."/>
            <person name="Krauss S."/>
            <person name="Naeve C."/>
            <person name="Bao Y."/>
            <person name="Bolotov P."/>
            <person name="Dernovoy D."/>
            <person name="Kiryutin B."/>
            <person name="Lipman D.J."/>
            <person name="Tatusova T."/>
        </authorList>
    </citation>
    <scope>NUCLEOTIDE SEQUENCE [GENOMIC RNA]</scope>
</reference>
<reference key="2">
    <citation type="submission" date="2007-10" db="EMBL/GenBank/DDBJ databases">
        <authorList>
            <consortium name="The NIAID Influenza Genome Sequencing Consortium"/>
        </authorList>
    </citation>
    <scope>NUCLEOTIDE SEQUENCE [GENOMIC RNA]</scope>
</reference>
<proteinExistence type="inferred from homology"/>
<accession>A8C8X3</accession>
<name>PB2_I67A2</name>
<dbReference type="EMBL" id="CY026298">
    <property type="protein sequence ID" value="ABV82594.1"/>
    <property type="molecule type" value="Viral_cRNA"/>
</dbReference>
<dbReference type="SMR" id="A8C8X3"/>
<dbReference type="Proteomes" id="UP000116872">
    <property type="component" value="Genome"/>
</dbReference>
<dbReference type="GO" id="GO:0033650">
    <property type="term" value="C:host cell mitochondrion"/>
    <property type="evidence" value="ECO:0007669"/>
    <property type="project" value="UniProtKB-SubCell"/>
</dbReference>
<dbReference type="GO" id="GO:0042025">
    <property type="term" value="C:host cell nucleus"/>
    <property type="evidence" value="ECO:0007669"/>
    <property type="project" value="UniProtKB-SubCell"/>
</dbReference>
<dbReference type="GO" id="GO:0044423">
    <property type="term" value="C:virion component"/>
    <property type="evidence" value="ECO:0007669"/>
    <property type="project" value="UniProtKB-UniRule"/>
</dbReference>
<dbReference type="GO" id="GO:0003723">
    <property type="term" value="F:RNA binding"/>
    <property type="evidence" value="ECO:0007669"/>
    <property type="project" value="UniProtKB-UniRule"/>
</dbReference>
<dbReference type="GO" id="GO:0003968">
    <property type="term" value="F:RNA-directed RNA polymerase activity"/>
    <property type="evidence" value="ECO:0007669"/>
    <property type="project" value="UniProtKB-UniRule"/>
</dbReference>
<dbReference type="GO" id="GO:0006370">
    <property type="term" value="P:7-methylguanosine mRNA capping"/>
    <property type="evidence" value="ECO:0007669"/>
    <property type="project" value="UniProtKB-UniRule"/>
</dbReference>
<dbReference type="GO" id="GO:0075526">
    <property type="term" value="P:cap snatching"/>
    <property type="evidence" value="ECO:0007669"/>
    <property type="project" value="UniProtKB-UniRule"/>
</dbReference>
<dbReference type="GO" id="GO:0006351">
    <property type="term" value="P:DNA-templated transcription"/>
    <property type="evidence" value="ECO:0007669"/>
    <property type="project" value="UniProtKB-UniRule"/>
</dbReference>
<dbReference type="GO" id="GO:0039545">
    <property type="term" value="P:symbiont-mediated suppression of host cytoplasmic pattern recognition receptor signaling pathway via inhibition of MAVS activity"/>
    <property type="evidence" value="ECO:0007669"/>
    <property type="project" value="UniProtKB-UniRule"/>
</dbReference>
<dbReference type="GO" id="GO:0039657">
    <property type="term" value="P:symbiont-mediated suppression of host gene expression"/>
    <property type="evidence" value="ECO:0007669"/>
    <property type="project" value="UniProtKB-KW"/>
</dbReference>
<dbReference type="GO" id="GO:0039523">
    <property type="term" value="P:symbiont-mediated suppression of host mRNA transcription via inhibition of RNA polymerase II activity"/>
    <property type="evidence" value="ECO:0007669"/>
    <property type="project" value="UniProtKB-UniRule"/>
</dbReference>
<dbReference type="GO" id="GO:0039694">
    <property type="term" value="P:viral RNA genome replication"/>
    <property type="evidence" value="ECO:0007669"/>
    <property type="project" value="InterPro"/>
</dbReference>
<dbReference type="FunFam" id="3.30.30.90:FF:000001">
    <property type="entry name" value="Polymerase basic protein 2"/>
    <property type="match status" value="1"/>
</dbReference>
<dbReference type="Gene3D" id="3.30.30.90">
    <property type="entry name" value="Polymerase Basic Protein 2, C-terminal domain"/>
    <property type="match status" value="1"/>
</dbReference>
<dbReference type="HAMAP" id="MF_04062">
    <property type="entry name" value="INV_PB2"/>
    <property type="match status" value="1"/>
</dbReference>
<dbReference type="InterPro" id="IPR049110">
    <property type="entry name" value="Flu_PB2_2nd"/>
</dbReference>
<dbReference type="InterPro" id="IPR049114">
    <property type="entry name" value="Flu_PB2_6th"/>
</dbReference>
<dbReference type="InterPro" id="IPR049115">
    <property type="entry name" value="Flu_PB2_C"/>
</dbReference>
<dbReference type="InterPro" id="IPR048298">
    <property type="entry name" value="Flu_PB2_CAP-bd"/>
</dbReference>
<dbReference type="InterPro" id="IPR049111">
    <property type="entry name" value="Flu_PB2_middle"/>
</dbReference>
<dbReference type="InterPro" id="IPR049106">
    <property type="entry name" value="Flu_PB2_N"/>
</dbReference>
<dbReference type="InterPro" id="IPR001591">
    <property type="entry name" value="INV_PB2"/>
</dbReference>
<dbReference type="InterPro" id="IPR049113">
    <property type="entry name" value="PB2_helical"/>
</dbReference>
<dbReference type="InterPro" id="IPR037258">
    <property type="entry name" value="PDB2_C"/>
</dbReference>
<dbReference type="Pfam" id="PF20947">
    <property type="entry name" value="Flu_PB2_1st"/>
    <property type="match status" value="1"/>
</dbReference>
<dbReference type="Pfam" id="PF20948">
    <property type="entry name" value="Flu_PB2_2nd"/>
    <property type="match status" value="1"/>
</dbReference>
<dbReference type="Pfam" id="PF20949">
    <property type="entry name" value="Flu_PB2_3rd"/>
    <property type="match status" value="1"/>
</dbReference>
<dbReference type="Pfam" id="PF20950">
    <property type="entry name" value="Flu_PB2_4th"/>
    <property type="match status" value="1"/>
</dbReference>
<dbReference type="Pfam" id="PF00604">
    <property type="entry name" value="Flu_PB2_5th"/>
    <property type="match status" value="1"/>
</dbReference>
<dbReference type="Pfam" id="PF20951">
    <property type="entry name" value="Flu_PB2_6th"/>
    <property type="match status" value="1"/>
</dbReference>
<dbReference type="Pfam" id="PF20952">
    <property type="entry name" value="Flu_PB2_7th"/>
    <property type="match status" value="1"/>
</dbReference>
<dbReference type="SUPFAM" id="SSF160453">
    <property type="entry name" value="PB2 C-terminal domain-like"/>
    <property type="match status" value="1"/>
</dbReference>
<sequence>MERIKELRDLMSQSRTREILTRTTVDHMAIIKKYTSGRQEKNPALRMKWMMAMKYPITADKRIIETIPERNEQGQTLWSRTSDAGSDRVMVSPLAVTWWNRNGPTASTVHYPKVYRTYFEKVERLKHGTFGPVHFRNHVKIRRRVDINPGHADLSAKEAQDVIMEVVFPNEVGARILTSESQLMITKEKKEELQECKISPLMVAYMLERELVRKTRFLPVAGGTSSVYIEVLHLTQGACWEQLYTPGGEVRNDDVGQSLIIAARSIVRRATVSADPLASLLEMCHSTQIGGVRMVDILRQNPTEEQAVDICKAAMGLRISSSFSFGGFTFKRTSGSSTKKEEEVLTGNLQTLKIRVHEGYEEFTMVGKRATAILRKATRRLVQLIVSGRDEQSIAEAIIVAMVFSQEDCMIKAVRGDLNFVNRANQRLNPMHQLLRHFQKDAKILFQNWGIEPIDNVMGMIGVLPDLTPSTEMSMRGVRISKMGVDEYSSTERVVVSIDRFLRVRDQQGNVLLSPEEVSETQGTEKLTITYSSSMMWEVNGPESVLVNTYQWIIRNWETVKIQWSQDPTMLYNKMEFEPFQSLVPKAARGQYSGFVRTLFQQMRDVLGTFDTVQIIKLLPFAAAPPKQSRMQFSSLTVNVRGSGMRILIRGNSPVFNYNKGTKRLTVLGKDAGALNEDPDEGTTGVESAVLRGFLILGREDRRYGPALSINELSSLAKGEKANVLIGQGDVVLVMKRKRDSSILTDSQTATKRIRMAIN</sequence>
<protein>
    <recommendedName>
        <fullName evidence="1">Polymerase basic protein 2</fullName>
    </recommendedName>
    <alternativeName>
        <fullName evidence="1">RNA-directed RNA polymerase subunit P3</fullName>
    </alternativeName>
</protein>
<organismHost>
    <name type="scientific">Aves</name>
    <dbReference type="NCBI Taxonomy" id="8782"/>
</organismHost>
<organismHost>
    <name type="scientific">Homo sapiens</name>
    <name type="common">Human</name>
    <dbReference type="NCBI Taxonomy" id="9606"/>
</organismHost>
<organismHost>
    <name type="scientific">Sus scrofa</name>
    <name type="common">Pig</name>
    <dbReference type="NCBI Taxonomy" id="9823"/>
</organismHost>
<evidence type="ECO:0000255" key="1">
    <source>
        <dbReference type="HAMAP-Rule" id="MF_04062"/>
    </source>
</evidence>
<feature type="chain" id="PRO_0000373038" description="Polymerase basic protein 2">
    <location>
        <begin position="1"/>
        <end position="759"/>
    </location>
</feature>
<feature type="short sequence motif" description="Nuclear localization signal" evidence="1">
    <location>
        <begin position="736"/>
        <end position="739"/>
    </location>
</feature>
<feature type="site" description="Mammalian adaptation" evidence="1">
    <location>
        <position position="627"/>
    </location>
</feature>
<comment type="function">
    <text evidence="1">Plays an essential role in transcription initiation and cap-stealing mechanism, in which cellular capped pre-mRNAs are used to generate primers for viral transcription. Recognizes and binds the 7-methylguanosine-containing cap of the target pre-RNA which is subsequently cleaved after 10-13 nucleotides by the viral protein PA. Plays a role in the initiation of the viral genome replication and modulates the activity of the ribonucleoprotein (RNP) complex. In addition, participates in the inhibition of type I interferon induction through interaction with and inhibition of the host mitochondrial antiviral signaling protein MAVS.</text>
</comment>
<comment type="subunit">
    <text evidence="1">Influenza RNA polymerase is composed of three subunits: PB1, PB2 and PA. Interacts (via N-terminus) with PB1 (via C-terminus). Interacts with nucleoprotein NP (via N-terminus). Interacts (via N-terminus) with host MAVS (via N-terminus); this interaction inhibits host innate immune response.</text>
</comment>
<comment type="subcellular location">
    <subcellularLocation>
        <location evidence="1">Virion</location>
    </subcellularLocation>
    <subcellularLocation>
        <location evidence="1">Host nucleus</location>
    </subcellularLocation>
    <subcellularLocation>
        <location evidence="1">Host mitochondrion</location>
    </subcellularLocation>
</comment>
<comment type="similarity">
    <text evidence="1">Belongs to the influenza viruses PB2 family.</text>
</comment>
<organism>
    <name type="scientific">Influenza A virus (strain A/Swine/Wisconsin/1/1967 H1N1)</name>
    <dbReference type="NCBI Taxonomy" id="382855"/>
    <lineage>
        <taxon>Viruses</taxon>
        <taxon>Riboviria</taxon>
        <taxon>Orthornavirae</taxon>
        <taxon>Negarnaviricota</taxon>
        <taxon>Polyploviricotina</taxon>
        <taxon>Insthoviricetes</taxon>
        <taxon>Articulavirales</taxon>
        <taxon>Orthomyxoviridae</taxon>
        <taxon>Alphainfluenzavirus</taxon>
        <taxon>Alphainfluenzavirus influenzae</taxon>
        <taxon>Influenza A virus</taxon>
    </lineage>
</organism>